<evidence type="ECO:0000255" key="1">
    <source>
        <dbReference type="HAMAP-Rule" id="MF_00230"/>
    </source>
</evidence>
<keyword id="KW-0169">Cobalamin biosynthesis</keyword>
<keyword id="KW-0328">Glycosyltransferase</keyword>
<keyword id="KW-1185">Reference proteome</keyword>
<keyword id="KW-0808">Transferase</keyword>
<comment type="function">
    <text evidence="1">Catalyzes the synthesis of alpha-ribazole-5'-phosphate from nicotinate mononucleotide (NAMN) and 5,6-dimethylbenzimidazole (DMB).</text>
</comment>
<comment type="catalytic activity">
    <reaction evidence="1">
        <text>5,6-dimethylbenzimidazole + nicotinate beta-D-ribonucleotide = alpha-ribazole 5'-phosphate + nicotinate + H(+)</text>
        <dbReference type="Rhea" id="RHEA:11196"/>
        <dbReference type="ChEBI" id="CHEBI:15378"/>
        <dbReference type="ChEBI" id="CHEBI:15890"/>
        <dbReference type="ChEBI" id="CHEBI:32544"/>
        <dbReference type="ChEBI" id="CHEBI:57502"/>
        <dbReference type="ChEBI" id="CHEBI:57918"/>
        <dbReference type="EC" id="2.4.2.21"/>
    </reaction>
</comment>
<comment type="pathway">
    <text evidence="1">Nucleoside biosynthesis; alpha-ribazole biosynthesis; alpha-ribazole from 5,6-dimethylbenzimidazole: step 1/2.</text>
</comment>
<comment type="similarity">
    <text evidence="1">Belongs to the CobT family.</text>
</comment>
<name>COBT_CLOD6</name>
<accession>Q180T6</accession>
<organism>
    <name type="scientific">Clostridioides difficile (strain 630)</name>
    <name type="common">Peptoclostridium difficile</name>
    <dbReference type="NCBI Taxonomy" id="272563"/>
    <lineage>
        <taxon>Bacteria</taxon>
        <taxon>Bacillati</taxon>
        <taxon>Bacillota</taxon>
        <taxon>Clostridia</taxon>
        <taxon>Peptostreptococcales</taxon>
        <taxon>Peptostreptococcaceae</taxon>
        <taxon>Clostridioides</taxon>
    </lineage>
</organism>
<dbReference type="EC" id="2.4.2.21" evidence="1"/>
<dbReference type="EMBL" id="AM180355">
    <property type="protein sequence ID" value="CAJ70342.1"/>
    <property type="molecule type" value="Genomic_DNA"/>
</dbReference>
<dbReference type="RefSeq" id="WP_003437772.1">
    <property type="nucleotide sequence ID" value="NZ_JAUPES010000009.1"/>
</dbReference>
<dbReference type="RefSeq" id="YP_001089959.1">
    <property type="nucleotide sequence ID" value="NC_009089.1"/>
</dbReference>
<dbReference type="SMR" id="Q180T6"/>
<dbReference type="STRING" id="272563.CD630_34390"/>
<dbReference type="EnsemblBacteria" id="CAJ70342">
    <property type="protein sequence ID" value="CAJ70342"/>
    <property type="gene ID" value="CD630_34390"/>
</dbReference>
<dbReference type="GeneID" id="66355899"/>
<dbReference type="KEGG" id="cdf:CD630_34390"/>
<dbReference type="KEGG" id="pdc:CDIF630_03748"/>
<dbReference type="PATRIC" id="fig|272563.120.peg.3633"/>
<dbReference type="eggNOG" id="COG2038">
    <property type="taxonomic scope" value="Bacteria"/>
</dbReference>
<dbReference type="OrthoDB" id="9781491at2"/>
<dbReference type="PhylomeDB" id="Q180T6"/>
<dbReference type="BioCyc" id="PDIF272563:G12WB-3616-MONOMER"/>
<dbReference type="UniPathway" id="UPA00061">
    <property type="reaction ID" value="UER00516"/>
</dbReference>
<dbReference type="Proteomes" id="UP000001978">
    <property type="component" value="Chromosome"/>
</dbReference>
<dbReference type="GO" id="GO:0008939">
    <property type="term" value="F:nicotinate-nucleotide-dimethylbenzimidazole phosphoribosyltransferase activity"/>
    <property type="evidence" value="ECO:0007669"/>
    <property type="project" value="UniProtKB-UniRule"/>
</dbReference>
<dbReference type="GO" id="GO:0009236">
    <property type="term" value="P:cobalamin biosynthetic process"/>
    <property type="evidence" value="ECO:0007669"/>
    <property type="project" value="UniProtKB-KW"/>
</dbReference>
<dbReference type="CDD" id="cd02439">
    <property type="entry name" value="DMB-PRT_CobT"/>
    <property type="match status" value="1"/>
</dbReference>
<dbReference type="FunFam" id="3.40.50.10210:FF:000001">
    <property type="entry name" value="Nicotinate-nucleotide--dimethylbenzimidazole phosphoribosyltransferase"/>
    <property type="match status" value="1"/>
</dbReference>
<dbReference type="Gene3D" id="1.10.1610.10">
    <property type="match status" value="1"/>
</dbReference>
<dbReference type="Gene3D" id="3.40.50.10210">
    <property type="match status" value="1"/>
</dbReference>
<dbReference type="HAMAP" id="MF_00230">
    <property type="entry name" value="CobT"/>
    <property type="match status" value="1"/>
</dbReference>
<dbReference type="InterPro" id="IPR003200">
    <property type="entry name" value="Nict_dMeBzImd_PRibTrfase"/>
</dbReference>
<dbReference type="InterPro" id="IPR017846">
    <property type="entry name" value="Nict_dMeBzImd_PRibTrfase_bact"/>
</dbReference>
<dbReference type="InterPro" id="IPR023195">
    <property type="entry name" value="Nict_dMeBzImd_PRibTrfase_N"/>
</dbReference>
<dbReference type="InterPro" id="IPR036087">
    <property type="entry name" value="Nict_dMeBzImd_PRibTrfase_sf"/>
</dbReference>
<dbReference type="NCBIfam" id="TIGR03160">
    <property type="entry name" value="cobT_DBIPRT"/>
    <property type="match status" value="1"/>
</dbReference>
<dbReference type="NCBIfam" id="NF000996">
    <property type="entry name" value="PRK00105.1"/>
    <property type="match status" value="1"/>
</dbReference>
<dbReference type="PANTHER" id="PTHR43463">
    <property type="entry name" value="NICOTINATE-NUCLEOTIDE--DIMETHYLBENZIMIDAZOLE PHOSPHORIBOSYLTRANSFERASE"/>
    <property type="match status" value="1"/>
</dbReference>
<dbReference type="PANTHER" id="PTHR43463:SF1">
    <property type="entry name" value="NICOTINATE-NUCLEOTIDE--DIMETHYLBENZIMIDAZOLE PHOSPHORIBOSYLTRANSFERASE"/>
    <property type="match status" value="1"/>
</dbReference>
<dbReference type="Pfam" id="PF02277">
    <property type="entry name" value="DBI_PRT"/>
    <property type="match status" value="1"/>
</dbReference>
<dbReference type="SUPFAM" id="SSF52733">
    <property type="entry name" value="Nicotinate mononucleotide:5,6-dimethylbenzimidazole phosphoribosyltransferase (CobT)"/>
    <property type="match status" value="1"/>
</dbReference>
<gene>
    <name evidence="1" type="primary">cobT</name>
    <name type="ordered locus">CD630_34390</name>
</gene>
<protein>
    <recommendedName>
        <fullName evidence="1">Nicotinate-nucleotide--dimethylbenzimidazole phosphoribosyltransferase</fullName>
        <shortName evidence="1">NN:DBI PRT</shortName>
        <ecNumber evidence="1">2.4.2.21</ecNumber>
    </recommendedName>
    <alternativeName>
        <fullName evidence="1">N(1)-alpha-phosphoribosyltransferase</fullName>
    </alternativeName>
</protein>
<reference key="1">
    <citation type="journal article" date="2006" name="Nat. Genet.">
        <title>The multidrug-resistant human pathogen Clostridium difficile has a highly mobile, mosaic genome.</title>
        <authorList>
            <person name="Sebaihia M."/>
            <person name="Wren B.W."/>
            <person name="Mullany P."/>
            <person name="Fairweather N.F."/>
            <person name="Minton N."/>
            <person name="Stabler R."/>
            <person name="Thomson N.R."/>
            <person name="Roberts A.P."/>
            <person name="Cerdeno-Tarraga A.M."/>
            <person name="Wang H."/>
            <person name="Holden M.T.G."/>
            <person name="Wright A."/>
            <person name="Churcher C."/>
            <person name="Quail M.A."/>
            <person name="Baker S."/>
            <person name="Bason N."/>
            <person name="Brooks K."/>
            <person name="Chillingworth T."/>
            <person name="Cronin A."/>
            <person name="Davis P."/>
            <person name="Dowd L."/>
            <person name="Fraser A."/>
            <person name="Feltwell T."/>
            <person name="Hance Z."/>
            <person name="Holroyd S."/>
            <person name="Jagels K."/>
            <person name="Moule S."/>
            <person name="Mungall K."/>
            <person name="Price C."/>
            <person name="Rabbinowitsch E."/>
            <person name="Sharp S."/>
            <person name="Simmonds M."/>
            <person name="Stevens K."/>
            <person name="Unwin L."/>
            <person name="Whithead S."/>
            <person name="Dupuy B."/>
            <person name="Dougan G."/>
            <person name="Barrell B."/>
            <person name="Parkhill J."/>
        </authorList>
    </citation>
    <scope>NUCLEOTIDE SEQUENCE [LARGE SCALE GENOMIC DNA]</scope>
    <source>
        <strain>630</strain>
    </source>
</reference>
<sequence length="348" mass="37354">MSLLESISKNIYSLDNSSIEKTKQRLDRLIHPTGSLGKIEDICMQLAGIFGNENFDTSKKVIIAFAGDHGVYEEGVAPDPQNITKLQFPNFSKGLCGVGVISKFVGADVVAVDVGINCDEKLDGVLDYKIRKGTSNMAKGPAMSKQEAIRCLEIGIEIAEQCIEKDYKVIGIGEMGIANTTPSTAIISVISGCDPLEVTGIGAGLKKERLKHKAEVIRKAIEINNPNPTDGVDILSKVGGFEIGSMAGVILGCSANRIPVVIDGFISYAAALIAYKINPKTREYMIASHLSAESGTKRALDILKLDPLLNMDMRLGEGSGAALAFDIIEASNYTYKNMATFDEIDMGR</sequence>
<feature type="chain" id="PRO_1000021584" description="Nicotinate-nucleotide--dimethylbenzimidazole phosphoribosyltransferase">
    <location>
        <begin position="1"/>
        <end position="348"/>
    </location>
</feature>
<feature type="active site" description="Proton acceptor" evidence="1">
    <location>
        <position position="317"/>
    </location>
</feature>
<proteinExistence type="inferred from homology"/>